<gene>
    <name evidence="1" type="primary">clpX</name>
    <name type="ordered locus">YpsIP31758_3091</name>
</gene>
<sequence>MTDKRKDGSGKLLYCSFCGKSQHEVRKLIAGPSVYICDECVDLCNDIIREEIKEVSPHRDRSSLPTPHEIRHHLDDYVIGQEPAKKVLAVAVYNHYKRLRNGDTSNGIELGKSNILLIGPTGSGKTLLAETLARLLDVPFTMADATTLTEAGYVGEDVENIIQKLLQKCDYDVQKAQRGIVYIDEIDKISRKSDNPSITRDVSGEGVQQALLKLIEGTIAAVPPQGGRKHPQQEFLQVDTSKILFICGGAFAGLDKVIGQRINTGSGIGFGAVVKGQSEKATEGELLSQVEPEDLIKFGLIPEFIGRLPVVATLSELSEDALIQILKEPKNALTKQYQALFSLEGVELEFRDEALTAIAKKAMARKTGARGLRSIVEGALLDTMYDLPSMDSVEKVVVDESVIAGQSAPMLIYGQPEAQASGE</sequence>
<comment type="function">
    <text evidence="1">ATP-dependent specificity component of the Clp protease. It directs the protease to specific substrates. Can perform chaperone functions in the absence of ClpP.</text>
</comment>
<comment type="subunit">
    <text evidence="1">Component of the ClpX-ClpP complex. Forms a hexameric ring that, in the presence of ATP, binds to fourteen ClpP subunits assembled into a disk-like structure with a central cavity, resembling the structure of eukaryotic proteasomes.</text>
</comment>
<comment type="similarity">
    <text evidence="1">Belongs to the ClpX chaperone family.</text>
</comment>
<evidence type="ECO:0000255" key="1">
    <source>
        <dbReference type="HAMAP-Rule" id="MF_00175"/>
    </source>
</evidence>
<evidence type="ECO:0000255" key="2">
    <source>
        <dbReference type="PROSITE-ProRule" id="PRU01250"/>
    </source>
</evidence>
<dbReference type="EMBL" id="CP000720">
    <property type="protein sequence ID" value="ABS49011.1"/>
    <property type="molecule type" value="Genomic_DNA"/>
</dbReference>
<dbReference type="RefSeq" id="WP_002208641.1">
    <property type="nucleotide sequence ID" value="NC_009708.1"/>
</dbReference>
<dbReference type="SMR" id="A7FLC3"/>
<dbReference type="GeneID" id="96664466"/>
<dbReference type="KEGG" id="ypi:YpsIP31758_3091"/>
<dbReference type="HOGENOM" id="CLU_014218_8_2_6"/>
<dbReference type="Proteomes" id="UP000002412">
    <property type="component" value="Chromosome"/>
</dbReference>
<dbReference type="GO" id="GO:0009376">
    <property type="term" value="C:HslUV protease complex"/>
    <property type="evidence" value="ECO:0007669"/>
    <property type="project" value="TreeGrafter"/>
</dbReference>
<dbReference type="GO" id="GO:0005524">
    <property type="term" value="F:ATP binding"/>
    <property type="evidence" value="ECO:0007669"/>
    <property type="project" value="UniProtKB-UniRule"/>
</dbReference>
<dbReference type="GO" id="GO:0016887">
    <property type="term" value="F:ATP hydrolysis activity"/>
    <property type="evidence" value="ECO:0007669"/>
    <property type="project" value="InterPro"/>
</dbReference>
<dbReference type="GO" id="GO:0140662">
    <property type="term" value="F:ATP-dependent protein folding chaperone"/>
    <property type="evidence" value="ECO:0007669"/>
    <property type="project" value="InterPro"/>
</dbReference>
<dbReference type="GO" id="GO:0046983">
    <property type="term" value="F:protein dimerization activity"/>
    <property type="evidence" value="ECO:0007669"/>
    <property type="project" value="InterPro"/>
</dbReference>
<dbReference type="GO" id="GO:0051082">
    <property type="term" value="F:unfolded protein binding"/>
    <property type="evidence" value="ECO:0007669"/>
    <property type="project" value="UniProtKB-UniRule"/>
</dbReference>
<dbReference type="GO" id="GO:0008270">
    <property type="term" value="F:zinc ion binding"/>
    <property type="evidence" value="ECO:0007669"/>
    <property type="project" value="InterPro"/>
</dbReference>
<dbReference type="GO" id="GO:0051301">
    <property type="term" value="P:cell division"/>
    <property type="evidence" value="ECO:0007669"/>
    <property type="project" value="TreeGrafter"/>
</dbReference>
<dbReference type="GO" id="GO:0051603">
    <property type="term" value="P:proteolysis involved in protein catabolic process"/>
    <property type="evidence" value="ECO:0007669"/>
    <property type="project" value="TreeGrafter"/>
</dbReference>
<dbReference type="CDD" id="cd19497">
    <property type="entry name" value="RecA-like_ClpX"/>
    <property type="match status" value="1"/>
</dbReference>
<dbReference type="FunFam" id="1.10.8.60:FF:000002">
    <property type="entry name" value="ATP-dependent Clp protease ATP-binding subunit ClpX"/>
    <property type="match status" value="1"/>
</dbReference>
<dbReference type="FunFam" id="3.40.50.300:FF:000005">
    <property type="entry name" value="ATP-dependent Clp protease ATP-binding subunit ClpX"/>
    <property type="match status" value="1"/>
</dbReference>
<dbReference type="Gene3D" id="1.10.8.60">
    <property type="match status" value="1"/>
</dbReference>
<dbReference type="Gene3D" id="6.20.220.10">
    <property type="entry name" value="ClpX chaperone, C4-type zinc finger domain"/>
    <property type="match status" value="1"/>
</dbReference>
<dbReference type="Gene3D" id="3.40.50.300">
    <property type="entry name" value="P-loop containing nucleotide triphosphate hydrolases"/>
    <property type="match status" value="1"/>
</dbReference>
<dbReference type="HAMAP" id="MF_00175">
    <property type="entry name" value="ClpX"/>
    <property type="match status" value="1"/>
</dbReference>
<dbReference type="InterPro" id="IPR003593">
    <property type="entry name" value="AAA+_ATPase"/>
</dbReference>
<dbReference type="InterPro" id="IPR050052">
    <property type="entry name" value="ATP-dep_Clp_protease_ClpX"/>
</dbReference>
<dbReference type="InterPro" id="IPR003959">
    <property type="entry name" value="ATPase_AAA_core"/>
</dbReference>
<dbReference type="InterPro" id="IPR019489">
    <property type="entry name" value="Clp_ATPase_C"/>
</dbReference>
<dbReference type="InterPro" id="IPR004487">
    <property type="entry name" value="Clp_protease_ATP-bd_su_ClpX"/>
</dbReference>
<dbReference type="InterPro" id="IPR046425">
    <property type="entry name" value="ClpX_bact"/>
</dbReference>
<dbReference type="InterPro" id="IPR027417">
    <property type="entry name" value="P-loop_NTPase"/>
</dbReference>
<dbReference type="InterPro" id="IPR010603">
    <property type="entry name" value="Znf_CppX_C4"/>
</dbReference>
<dbReference type="InterPro" id="IPR038366">
    <property type="entry name" value="Znf_CppX_C4_sf"/>
</dbReference>
<dbReference type="NCBIfam" id="TIGR00382">
    <property type="entry name" value="clpX"/>
    <property type="match status" value="1"/>
</dbReference>
<dbReference type="NCBIfam" id="NF003745">
    <property type="entry name" value="PRK05342.1"/>
    <property type="match status" value="1"/>
</dbReference>
<dbReference type="PANTHER" id="PTHR48102:SF7">
    <property type="entry name" value="ATP-DEPENDENT CLP PROTEASE ATP-BINDING SUBUNIT CLPX-LIKE, MITOCHONDRIAL"/>
    <property type="match status" value="1"/>
</dbReference>
<dbReference type="PANTHER" id="PTHR48102">
    <property type="entry name" value="ATP-DEPENDENT CLP PROTEASE ATP-BINDING SUBUNIT CLPX-LIKE, MITOCHONDRIAL-RELATED"/>
    <property type="match status" value="1"/>
</dbReference>
<dbReference type="Pfam" id="PF07724">
    <property type="entry name" value="AAA_2"/>
    <property type="match status" value="1"/>
</dbReference>
<dbReference type="Pfam" id="PF10431">
    <property type="entry name" value="ClpB_D2-small"/>
    <property type="match status" value="1"/>
</dbReference>
<dbReference type="Pfam" id="PF06689">
    <property type="entry name" value="zf-C4_ClpX"/>
    <property type="match status" value="1"/>
</dbReference>
<dbReference type="SMART" id="SM00382">
    <property type="entry name" value="AAA"/>
    <property type="match status" value="1"/>
</dbReference>
<dbReference type="SMART" id="SM01086">
    <property type="entry name" value="ClpB_D2-small"/>
    <property type="match status" value="1"/>
</dbReference>
<dbReference type="SMART" id="SM00994">
    <property type="entry name" value="zf-C4_ClpX"/>
    <property type="match status" value="1"/>
</dbReference>
<dbReference type="SUPFAM" id="SSF57716">
    <property type="entry name" value="Glucocorticoid receptor-like (DNA-binding domain)"/>
    <property type="match status" value="1"/>
</dbReference>
<dbReference type="SUPFAM" id="SSF52540">
    <property type="entry name" value="P-loop containing nucleoside triphosphate hydrolases"/>
    <property type="match status" value="1"/>
</dbReference>
<dbReference type="PROSITE" id="PS51902">
    <property type="entry name" value="CLPX_ZB"/>
    <property type="match status" value="1"/>
</dbReference>
<protein>
    <recommendedName>
        <fullName evidence="1">ATP-dependent Clp protease ATP-binding subunit ClpX</fullName>
    </recommendedName>
</protein>
<feature type="chain" id="PRO_1000058346" description="ATP-dependent Clp protease ATP-binding subunit ClpX">
    <location>
        <begin position="1"/>
        <end position="423"/>
    </location>
</feature>
<feature type="domain" description="ClpX-type ZB" evidence="2">
    <location>
        <begin position="2"/>
        <end position="56"/>
    </location>
</feature>
<feature type="binding site" evidence="2">
    <location>
        <position position="15"/>
    </location>
    <ligand>
        <name>Zn(2+)</name>
        <dbReference type="ChEBI" id="CHEBI:29105"/>
    </ligand>
</feature>
<feature type="binding site" evidence="2">
    <location>
        <position position="18"/>
    </location>
    <ligand>
        <name>Zn(2+)</name>
        <dbReference type="ChEBI" id="CHEBI:29105"/>
    </ligand>
</feature>
<feature type="binding site" evidence="2">
    <location>
        <position position="37"/>
    </location>
    <ligand>
        <name>Zn(2+)</name>
        <dbReference type="ChEBI" id="CHEBI:29105"/>
    </ligand>
</feature>
<feature type="binding site" evidence="2">
    <location>
        <position position="40"/>
    </location>
    <ligand>
        <name>Zn(2+)</name>
        <dbReference type="ChEBI" id="CHEBI:29105"/>
    </ligand>
</feature>
<feature type="binding site" evidence="1">
    <location>
        <begin position="120"/>
        <end position="127"/>
    </location>
    <ligand>
        <name>ATP</name>
        <dbReference type="ChEBI" id="CHEBI:30616"/>
    </ligand>
</feature>
<accession>A7FLC3</accession>
<keyword id="KW-0067">ATP-binding</keyword>
<keyword id="KW-0143">Chaperone</keyword>
<keyword id="KW-0479">Metal-binding</keyword>
<keyword id="KW-0547">Nucleotide-binding</keyword>
<keyword id="KW-0862">Zinc</keyword>
<proteinExistence type="inferred from homology"/>
<reference key="1">
    <citation type="journal article" date="2007" name="PLoS Genet.">
        <title>The complete genome sequence of Yersinia pseudotuberculosis IP31758, the causative agent of Far East scarlet-like fever.</title>
        <authorList>
            <person name="Eppinger M."/>
            <person name="Rosovitz M.J."/>
            <person name="Fricke W.F."/>
            <person name="Rasko D.A."/>
            <person name="Kokorina G."/>
            <person name="Fayolle C."/>
            <person name="Lindler L.E."/>
            <person name="Carniel E."/>
            <person name="Ravel J."/>
        </authorList>
    </citation>
    <scope>NUCLEOTIDE SEQUENCE [LARGE SCALE GENOMIC DNA]</scope>
    <source>
        <strain>IP 31758</strain>
    </source>
</reference>
<organism>
    <name type="scientific">Yersinia pseudotuberculosis serotype O:1b (strain IP 31758)</name>
    <dbReference type="NCBI Taxonomy" id="349747"/>
    <lineage>
        <taxon>Bacteria</taxon>
        <taxon>Pseudomonadati</taxon>
        <taxon>Pseudomonadota</taxon>
        <taxon>Gammaproteobacteria</taxon>
        <taxon>Enterobacterales</taxon>
        <taxon>Yersiniaceae</taxon>
        <taxon>Yersinia</taxon>
    </lineage>
</organism>
<name>CLPX_YERP3</name>